<proteinExistence type="evidence at transcript level"/>
<reference key="1">
    <citation type="journal article" date="1994" name="Genes Dev.">
        <title>The cAMP receptor CAR4 regulates axial patterning and cellular differentiation during late development of Dictyostelium.</title>
        <authorList>
            <person name="Louis J.M."/>
            <person name="Ginsburg G.T."/>
            <person name="Kimmel A.R."/>
        </authorList>
    </citation>
    <scope>NUCLEOTIDE SEQUENCE</scope>
    <scope>FUNCTION</scope>
    <scope>DEVELOPMENTAL STAGE</scope>
    <source>
        <strain>NC-4</strain>
    </source>
</reference>
<reference key="2">
    <citation type="journal article" date="2005" name="Nature">
        <title>The genome of the social amoeba Dictyostelium discoideum.</title>
        <authorList>
            <person name="Eichinger L."/>
            <person name="Pachebat J.A."/>
            <person name="Gloeckner G."/>
            <person name="Rajandream M.A."/>
            <person name="Sucgang R."/>
            <person name="Berriman M."/>
            <person name="Song J."/>
            <person name="Olsen R."/>
            <person name="Szafranski K."/>
            <person name="Xu Q."/>
            <person name="Tunggal B."/>
            <person name="Kummerfeld S."/>
            <person name="Madera M."/>
            <person name="Konfortov B.A."/>
            <person name="Rivero F."/>
            <person name="Bankier A.T."/>
            <person name="Lehmann R."/>
            <person name="Hamlin N."/>
            <person name="Davies R."/>
            <person name="Gaudet P."/>
            <person name="Fey P."/>
            <person name="Pilcher K."/>
            <person name="Chen G."/>
            <person name="Saunders D."/>
            <person name="Sodergren E.J."/>
            <person name="Davis P."/>
            <person name="Kerhornou A."/>
            <person name="Nie X."/>
            <person name="Hall N."/>
            <person name="Anjard C."/>
            <person name="Hemphill L."/>
            <person name="Bason N."/>
            <person name="Farbrother P."/>
            <person name="Desany B."/>
            <person name="Just E."/>
            <person name="Morio T."/>
            <person name="Rost R."/>
            <person name="Churcher C.M."/>
            <person name="Cooper J."/>
            <person name="Haydock S."/>
            <person name="van Driessche N."/>
            <person name="Cronin A."/>
            <person name="Goodhead I."/>
            <person name="Muzny D.M."/>
            <person name="Mourier T."/>
            <person name="Pain A."/>
            <person name="Lu M."/>
            <person name="Harper D."/>
            <person name="Lindsay R."/>
            <person name="Hauser H."/>
            <person name="James K.D."/>
            <person name="Quiles M."/>
            <person name="Madan Babu M."/>
            <person name="Saito T."/>
            <person name="Buchrieser C."/>
            <person name="Wardroper A."/>
            <person name="Felder M."/>
            <person name="Thangavelu M."/>
            <person name="Johnson D."/>
            <person name="Knights A."/>
            <person name="Loulseged H."/>
            <person name="Mungall K.L."/>
            <person name="Oliver K."/>
            <person name="Price C."/>
            <person name="Quail M.A."/>
            <person name="Urushihara H."/>
            <person name="Hernandez J."/>
            <person name="Rabbinowitsch E."/>
            <person name="Steffen D."/>
            <person name="Sanders M."/>
            <person name="Ma J."/>
            <person name="Kohara Y."/>
            <person name="Sharp S."/>
            <person name="Simmonds M.N."/>
            <person name="Spiegler S."/>
            <person name="Tivey A."/>
            <person name="Sugano S."/>
            <person name="White B."/>
            <person name="Walker D."/>
            <person name="Woodward J.R."/>
            <person name="Winckler T."/>
            <person name="Tanaka Y."/>
            <person name="Shaulsky G."/>
            <person name="Schleicher M."/>
            <person name="Weinstock G.M."/>
            <person name="Rosenthal A."/>
            <person name="Cox E.C."/>
            <person name="Chisholm R.L."/>
            <person name="Gibbs R.A."/>
            <person name="Loomis W.F."/>
            <person name="Platzer M."/>
            <person name="Kay R.R."/>
            <person name="Williams J.G."/>
            <person name="Dear P.H."/>
            <person name="Noegel A.A."/>
            <person name="Barrell B.G."/>
            <person name="Kuspa A."/>
        </authorList>
    </citation>
    <scope>NUCLEOTIDE SEQUENCE [LARGE SCALE GENOMIC DNA]</scope>
    <source>
        <strain>AX4</strain>
    </source>
</reference>
<organism>
    <name type="scientific">Dictyostelium discoideum</name>
    <name type="common">Social amoeba</name>
    <dbReference type="NCBI Taxonomy" id="44689"/>
    <lineage>
        <taxon>Eukaryota</taxon>
        <taxon>Amoebozoa</taxon>
        <taxon>Evosea</taxon>
        <taxon>Eumycetozoa</taxon>
        <taxon>Dictyostelia</taxon>
        <taxon>Dictyosteliales</taxon>
        <taxon>Dictyosteliaceae</taxon>
        <taxon>Dictyostelium</taxon>
    </lineage>
</organism>
<dbReference type="EMBL" id="AAFI02000023">
    <property type="protein sequence ID" value="EAL68088.1"/>
    <property type="molecule type" value="Genomic_DNA"/>
</dbReference>
<dbReference type="PIR" id="A54813">
    <property type="entry name" value="A54813"/>
</dbReference>
<dbReference type="RefSeq" id="XP_642216.1">
    <property type="nucleotide sequence ID" value="XM_637124.1"/>
</dbReference>
<dbReference type="SMR" id="Q9TX43"/>
<dbReference type="FunCoup" id="Q9TX43">
    <property type="interactions" value="32"/>
</dbReference>
<dbReference type="STRING" id="44689.Q9TX43"/>
<dbReference type="GlyCosmos" id="Q9TX43">
    <property type="glycosylation" value="1 site, No reported glycans"/>
</dbReference>
<dbReference type="GlyGen" id="Q9TX43">
    <property type="glycosylation" value="1 site"/>
</dbReference>
<dbReference type="PaxDb" id="44689-DDB0216256"/>
<dbReference type="EnsemblProtists" id="EAL68088">
    <property type="protein sequence ID" value="EAL68088"/>
    <property type="gene ID" value="DDB_G0277831"/>
</dbReference>
<dbReference type="GeneID" id="8621423"/>
<dbReference type="KEGG" id="ddi:DDB_G0277831"/>
<dbReference type="dictyBase" id="DDB_G0277831">
    <property type="gene designation" value="carD"/>
</dbReference>
<dbReference type="VEuPathDB" id="AmoebaDB:DDB_G0277831"/>
<dbReference type="HOGENOM" id="CLU_050319_0_0_1"/>
<dbReference type="InParanoid" id="Q9TX43"/>
<dbReference type="PhylomeDB" id="Q9TX43"/>
<dbReference type="PRO" id="PR:Q9TX43"/>
<dbReference type="Proteomes" id="UP000002195">
    <property type="component" value="Chromosome 3"/>
</dbReference>
<dbReference type="GO" id="GO:0005886">
    <property type="term" value="C:plasma membrane"/>
    <property type="evidence" value="ECO:0000318"/>
    <property type="project" value="GO_Central"/>
</dbReference>
<dbReference type="GO" id="GO:0030552">
    <property type="term" value="F:cAMP binding"/>
    <property type="evidence" value="ECO:0000314"/>
    <property type="project" value="dictyBase"/>
</dbReference>
<dbReference type="GO" id="GO:0001646">
    <property type="term" value="F:cAMP receptor activity"/>
    <property type="evidence" value="ECO:0000250"/>
    <property type="project" value="dictyBase"/>
</dbReference>
<dbReference type="GO" id="GO:0004930">
    <property type="term" value="F:G protein-coupled receptor activity"/>
    <property type="evidence" value="ECO:0000318"/>
    <property type="project" value="GO_Central"/>
</dbReference>
<dbReference type="GO" id="GO:0008160">
    <property type="term" value="F:protein tyrosine phosphatase activator activity"/>
    <property type="evidence" value="ECO:0000304"/>
    <property type="project" value="dictyBase"/>
</dbReference>
<dbReference type="GO" id="GO:0007189">
    <property type="term" value="P:adenylate cyclase-activating G protein-coupled receptor signaling pathway"/>
    <property type="evidence" value="ECO:0000318"/>
    <property type="project" value="GO_Central"/>
</dbReference>
<dbReference type="GO" id="GO:0030154">
    <property type="term" value="P:cell differentiation"/>
    <property type="evidence" value="ECO:0000315"/>
    <property type="project" value="dictyBase"/>
</dbReference>
<dbReference type="GO" id="GO:0031154">
    <property type="term" value="P:culmination involved in sorocarp development"/>
    <property type="evidence" value="ECO:0000315"/>
    <property type="project" value="dictyBase"/>
</dbReference>
<dbReference type="GO" id="GO:0010629">
    <property type="term" value="P:negative regulation of gene expression"/>
    <property type="evidence" value="ECO:0000315"/>
    <property type="project" value="dictyBase"/>
</dbReference>
<dbReference type="GO" id="GO:0010628">
    <property type="term" value="P:positive regulation of gene expression"/>
    <property type="evidence" value="ECO:0000315"/>
    <property type="project" value="dictyBase"/>
</dbReference>
<dbReference type="GO" id="GO:0007165">
    <property type="term" value="P:signal transduction"/>
    <property type="evidence" value="ECO:0000304"/>
    <property type="project" value="dictyBase"/>
</dbReference>
<dbReference type="CDD" id="cd14940">
    <property type="entry name" value="7tmE_cAMP_R_Slime_mold"/>
    <property type="match status" value="1"/>
</dbReference>
<dbReference type="FunFam" id="1.20.1070.10:FF:000404">
    <property type="entry name" value="Cyclic AMP receptor-like protein A"/>
    <property type="match status" value="1"/>
</dbReference>
<dbReference type="Gene3D" id="1.20.1070.10">
    <property type="entry name" value="Rhodopsin 7-helix transmembrane proteins"/>
    <property type="match status" value="1"/>
</dbReference>
<dbReference type="InterPro" id="IPR022343">
    <property type="entry name" value="GCR1-cAMP_receptor"/>
</dbReference>
<dbReference type="InterPro" id="IPR017981">
    <property type="entry name" value="GPCR_2-like_7TM"/>
</dbReference>
<dbReference type="InterPro" id="IPR000848">
    <property type="entry name" value="GPCR_cAMP"/>
</dbReference>
<dbReference type="PANTHER" id="PTHR23112:SF23">
    <property type="entry name" value="CYCLIC AMP RECEPTOR 1-RELATED"/>
    <property type="match status" value="1"/>
</dbReference>
<dbReference type="PANTHER" id="PTHR23112">
    <property type="entry name" value="G PROTEIN-COUPLED RECEPTOR 157-RELATED"/>
    <property type="match status" value="1"/>
</dbReference>
<dbReference type="Pfam" id="PF05462">
    <property type="entry name" value="Dicty_CAR"/>
    <property type="match status" value="1"/>
</dbReference>
<dbReference type="PRINTS" id="PR02001">
    <property type="entry name" value="GCR1CAMPR"/>
</dbReference>
<dbReference type="PRINTS" id="PR00247">
    <property type="entry name" value="GPCRCAMP"/>
</dbReference>
<dbReference type="SUPFAM" id="SSF81321">
    <property type="entry name" value="Family A G protein-coupled receptor-like"/>
    <property type="match status" value="1"/>
</dbReference>
<dbReference type="PROSITE" id="PS50261">
    <property type="entry name" value="G_PROTEIN_RECEP_F2_4"/>
    <property type="match status" value="1"/>
</dbReference>
<protein>
    <recommendedName>
        <fullName>Cyclic AMP receptor 4</fullName>
        <shortName>cAMP receptor 4</shortName>
    </recommendedName>
</protein>
<gene>
    <name type="primary">carD</name>
    <name type="synonym">car4</name>
    <name type="ORF">DDB_G0277831</name>
</gene>
<comment type="function">
    <text evidence="3">Receptor for cAMP. Regulates axial patterning and cellular differentiation during late development. The activity of this receptor is mediated by G proteins.</text>
</comment>
<comment type="subcellular location">
    <subcellularLocation>
        <location>Membrane</location>
        <topology>Multi-pass membrane protein</topology>
    </subcellularLocation>
</comment>
<comment type="developmental stage">
    <text evidence="3">Initially expressed during tip elongation and continues to accumulate into culmination.</text>
</comment>
<comment type="PTM">
    <text>C-terminal Ser or Thr residues may be phosphorylated.</text>
</comment>
<comment type="similarity">
    <text evidence="4">Belongs to the G-protein coupled receptor 5 family.</text>
</comment>
<sequence>MKVLQEINLTYSILVIADFSSIFGCLLVLIAFKKLKLLRNHITRVIACFCVSSLLKDIISTGLTLSLGPQNEAGSTSFQCYLYAITITYGSLACWLWTLCLAFSIYNLIVKREPEPEKYEKFYHGVCWTIPLICVIVMLAKKTIEPVGNWCWISEKYVGYRFGLFYGPFFAIWIISAVLVGLTSRYTYSVIRNSVSDNKDKHMTYQFKLINYIIVFLLCWVFAIVNRILNGLGYYPTLPNILHTYFSVSHGFFASVTFIYNNPLMWRYWGSKIFLIFAKFGYFVELQRRLDRNKNNNNPSPILNSYAATVYHSSTIESLSLQHNNDISNDNQQQQQQQQTPQQPQQQFQQQQSPTVIEMQNLKQDQNIENNEQNENCYNTIDTNIEINTNKLNDNSFEITQPSNDLNTIENNNNYNNNNNNNNNNSLVIEKEKDEREKKDNKF</sequence>
<evidence type="ECO:0000255" key="1"/>
<evidence type="ECO:0000256" key="2">
    <source>
        <dbReference type="SAM" id="MobiDB-lite"/>
    </source>
</evidence>
<evidence type="ECO:0000269" key="3">
    <source>
    </source>
</evidence>
<evidence type="ECO:0000305" key="4"/>
<keyword id="KW-0297">G-protein coupled receptor</keyword>
<keyword id="KW-0325">Glycoprotein</keyword>
<keyword id="KW-0472">Membrane</keyword>
<keyword id="KW-0597">Phosphoprotein</keyword>
<keyword id="KW-0675">Receptor</keyword>
<keyword id="KW-1185">Reference proteome</keyword>
<keyword id="KW-0807">Transducer</keyword>
<keyword id="KW-0812">Transmembrane</keyword>
<keyword id="KW-1133">Transmembrane helix</keyword>
<feature type="chain" id="PRO_0000195083" description="Cyclic AMP receptor 4">
    <location>
        <begin position="1"/>
        <end position="443"/>
    </location>
</feature>
<feature type="topological domain" description="Extracellular" evidence="1">
    <location>
        <begin position="1"/>
        <end position="11"/>
    </location>
</feature>
<feature type="transmembrane region" description="Helical; Name=1" evidence="1">
    <location>
        <begin position="12"/>
        <end position="32"/>
    </location>
</feature>
<feature type="topological domain" description="Cytoplasmic" evidence="1">
    <location>
        <begin position="33"/>
        <end position="44"/>
    </location>
</feature>
<feature type="transmembrane region" description="Helical; Name=2" evidence="1">
    <location>
        <begin position="45"/>
        <end position="65"/>
    </location>
</feature>
<feature type="topological domain" description="Extracellular" evidence="1">
    <location>
        <begin position="66"/>
        <end position="89"/>
    </location>
</feature>
<feature type="transmembrane region" description="Helical; Name=3" evidence="1">
    <location>
        <begin position="90"/>
        <end position="110"/>
    </location>
</feature>
<feature type="topological domain" description="Cytoplasmic" evidence="1">
    <location>
        <begin position="111"/>
        <end position="119"/>
    </location>
</feature>
<feature type="transmembrane region" description="Helical; Name=4" evidence="1">
    <location>
        <begin position="120"/>
        <end position="140"/>
    </location>
</feature>
<feature type="topological domain" description="Extracellular" evidence="1">
    <location>
        <begin position="141"/>
        <end position="161"/>
    </location>
</feature>
<feature type="transmembrane region" description="Helical; Name=5" evidence="1">
    <location>
        <begin position="162"/>
        <end position="182"/>
    </location>
</feature>
<feature type="topological domain" description="Cytoplasmic" evidence="1">
    <location>
        <begin position="183"/>
        <end position="208"/>
    </location>
</feature>
<feature type="transmembrane region" description="Helical; Name=6" evidence="1">
    <location>
        <begin position="209"/>
        <end position="229"/>
    </location>
</feature>
<feature type="topological domain" description="Extracellular" evidence="1">
    <location>
        <begin position="230"/>
        <end position="263"/>
    </location>
</feature>
<feature type="transmembrane region" description="Helical; Name=7" evidence="1">
    <location>
        <begin position="264"/>
        <end position="284"/>
    </location>
</feature>
<feature type="topological domain" description="Cytoplasmic" evidence="1">
    <location>
        <begin position="285"/>
        <end position="443"/>
    </location>
</feature>
<feature type="region of interest" description="Disordered" evidence="2">
    <location>
        <begin position="325"/>
        <end position="354"/>
    </location>
</feature>
<feature type="region of interest" description="Disordered" evidence="2">
    <location>
        <begin position="396"/>
        <end position="443"/>
    </location>
</feature>
<feature type="compositionally biased region" description="Low complexity" evidence="2">
    <location>
        <begin position="332"/>
        <end position="352"/>
    </location>
</feature>
<feature type="compositionally biased region" description="Polar residues" evidence="2">
    <location>
        <begin position="396"/>
        <end position="410"/>
    </location>
</feature>
<feature type="compositionally biased region" description="Low complexity" evidence="2">
    <location>
        <begin position="411"/>
        <end position="425"/>
    </location>
</feature>
<feature type="compositionally biased region" description="Basic and acidic residues" evidence="2">
    <location>
        <begin position="429"/>
        <end position="443"/>
    </location>
</feature>
<feature type="glycosylation site" description="N-linked (GlcNAc...) asparagine" evidence="1">
    <location>
        <position position="8"/>
    </location>
</feature>
<feature type="sequence conflict" description="In Ref. 1." evidence="4" ref="1">
    <original>F</original>
    <variation>I</variation>
    <location>
        <position position="122"/>
    </location>
</feature>
<feature type="sequence conflict" description="In Ref. 1." evidence="4" ref="1">
    <original>LF</original>
    <variation>YI</variation>
    <location>
        <begin position="164"/>
        <end position="165"/>
    </location>
</feature>
<feature type="sequence conflict" description="In Ref. 1." evidence="4" ref="1">
    <original>H</original>
    <variation>HH</variation>
    <location>
        <position position="323"/>
    </location>
</feature>
<feature type="sequence conflict" description="In Ref. 1." evidence="4" ref="1">
    <original>N</original>
    <variation>I</variation>
    <location>
        <position position="388"/>
    </location>
</feature>
<feature type="sequence conflict" description="In Ref. 1." evidence="4" ref="1">
    <location>
        <position position="431"/>
    </location>
</feature>
<accession>Q9TX43</accession>
<accession>Q54YI6</accession>
<name>CAR4_DICDI</name>